<gene>
    <name type="primary">irs1</name>
    <name type="ORF">pi058</name>
    <name type="ORF">SPBC8D2.06</name>
</gene>
<feature type="chain" id="PRO_0000098603" description="Isoleucine--tRNA ligase, cytoplasmic">
    <location>
        <begin position="1"/>
        <end position="1064"/>
    </location>
</feature>
<feature type="short sequence motif" description="'HIGH' region">
    <location>
        <begin position="42"/>
        <end position="52"/>
    </location>
</feature>
<feature type="short sequence motif" description="'KMSKS' region">
    <location>
        <begin position="597"/>
        <end position="601"/>
    </location>
</feature>
<feature type="binding site" evidence="1">
    <location>
        <position position="600"/>
    </location>
    <ligand>
        <name>ATP</name>
        <dbReference type="ChEBI" id="CHEBI:30616"/>
    </ligand>
</feature>
<reference key="1">
    <citation type="journal article" date="2000" name="Yeast">
        <title>A 38 kb segment containing the cdc2 gene from the left arm of fission yeast chromosome II: sequence analysis and characterization of the genomic DNA and cDNAs encoded on the segment.</title>
        <authorList>
            <person name="Machida M."/>
            <person name="Yamazaki S."/>
            <person name="Kunihiro S."/>
            <person name="Tanaka T."/>
            <person name="Kushida N."/>
            <person name="Jinno K."/>
            <person name="Haikawa Y."/>
            <person name="Yamazaki J."/>
            <person name="Yamamoto S."/>
            <person name="Sekine M."/>
            <person name="Oguchi A."/>
            <person name="Nagai Y."/>
            <person name="Sakai M."/>
            <person name="Aoki K."/>
            <person name="Ogura K."/>
            <person name="Kudoh Y."/>
            <person name="Kikuchi H."/>
            <person name="Zhang M.Q."/>
            <person name="Yanagida M."/>
        </authorList>
    </citation>
    <scope>NUCLEOTIDE SEQUENCE [LARGE SCALE GENOMIC DNA]</scope>
    <source>
        <strain>972 / ATCC 24843</strain>
    </source>
</reference>
<reference key="2">
    <citation type="journal article" date="2002" name="Nature">
        <title>The genome sequence of Schizosaccharomyces pombe.</title>
        <authorList>
            <person name="Wood V."/>
            <person name="Gwilliam R."/>
            <person name="Rajandream M.A."/>
            <person name="Lyne M.H."/>
            <person name="Lyne R."/>
            <person name="Stewart A."/>
            <person name="Sgouros J.G."/>
            <person name="Peat N."/>
            <person name="Hayles J."/>
            <person name="Baker S.G."/>
            <person name="Basham D."/>
            <person name="Bowman S."/>
            <person name="Brooks K."/>
            <person name="Brown D."/>
            <person name="Brown S."/>
            <person name="Chillingworth T."/>
            <person name="Churcher C.M."/>
            <person name="Collins M."/>
            <person name="Connor R."/>
            <person name="Cronin A."/>
            <person name="Davis P."/>
            <person name="Feltwell T."/>
            <person name="Fraser A."/>
            <person name="Gentles S."/>
            <person name="Goble A."/>
            <person name="Hamlin N."/>
            <person name="Harris D.E."/>
            <person name="Hidalgo J."/>
            <person name="Hodgson G."/>
            <person name="Holroyd S."/>
            <person name="Hornsby T."/>
            <person name="Howarth S."/>
            <person name="Huckle E.J."/>
            <person name="Hunt S."/>
            <person name="Jagels K."/>
            <person name="James K.D."/>
            <person name="Jones L."/>
            <person name="Jones M."/>
            <person name="Leather S."/>
            <person name="McDonald S."/>
            <person name="McLean J."/>
            <person name="Mooney P."/>
            <person name="Moule S."/>
            <person name="Mungall K.L."/>
            <person name="Murphy L.D."/>
            <person name="Niblett D."/>
            <person name="Odell C."/>
            <person name="Oliver K."/>
            <person name="O'Neil S."/>
            <person name="Pearson D."/>
            <person name="Quail M.A."/>
            <person name="Rabbinowitsch E."/>
            <person name="Rutherford K.M."/>
            <person name="Rutter S."/>
            <person name="Saunders D."/>
            <person name="Seeger K."/>
            <person name="Sharp S."/>
            <person name="Skelton J."/>
            <person name="Simmonds M.N."/>
            <person name="Squares R."/>
            <person name="Squares S."/>
            <person name="Stevens K."/>
            <person name="Taylor K."/>
            <person name="Taylor R.G."/>
            <person name="Tivey A."/>
            <person name="Walsh S.V."/>
            <person name="Warren T."/>
            <person name="Whitehead S."/>
            <person name="Woodward J.R."/>
            <person name="Volckaert G."/>
            <person name="Aert R."/>
            <person name="Robben J."/>
            <person name="Grymonprez B."/>
            <person name="Weltjens I."/>
            <person name="Vanstreels E."/>
            <person name="Rieger M."/>
            <person name="Schaefer M."/>
            <person name="Mueller-Auer S."/>
            <person name="Gabel C."/>
            <person name="Fuchs M."/>
            <person name="Duesterhoeft A."/>
            <person name="Fritzc C."/>
            <person name="Holzer E."/>
            <person name="Moestl D."/>
            <person name="Hilbert H."/>
            <person name="Borzym K."/>
            <person name="Langer I."/>
            <person name="Beck A."/>
            <person name="Lehrach H."/>
            <person name="Reinhardt R."/>
            <person name="Pohl T.M."/>
            <person name="Eger P."/>
            <person name="Zimmermann W."/>
            <person name="Wedler H."/>
            <person name="Wambutt R."/>
            <person name="Purnelle B."/>
            <person name="Goffeau A."/>
            <person name="Cadieu E."/>
            <person name="Dreano S."/>
            <person name="Gloux S."/>
            <person name="Lelaure V."/>
            <person name="Mottier S."/>
            <person name="Galibert F."/>
            <person name="Aves S.J."/>
            <person name="Xiang Z."/>
            <person name="Hunt C."/>
            <person name="Moore K."/>
            <person name="Hurst S.M."/>
            <person name="Lucas M."/>
            <person name="Rochet M."/>
            <person name="Gaillardin C."/>
            <person name="Tallada V.A."/>
            <person name="Garzon A."/>
            <person name="Thode G."/>
            <person name="Daga R.R."/>
            <person name="Cruzado L."/>
            <person name="Jimenez J."/>
            <person name="Sanchez M."/>
            <person name="del Rey F."/>
            <person name="Benito J."/>
            <person name="Dominguez A."/>
            <person name="Revuelta J.L."/>
            <person name="Moreno S."/>
            <person name="Armstrong J."/>
            <person name="Forsburg S.L."/>
            <person name="Cerutti L."/>
            <person name="Lowe T."/>
            <person name="McCombie W.R."/>
            <person name="Paulsen I."/>
            <person name="Potashkin J."/>
            <person name="Shpakovski G.V."/>
            <person name="Ussery D."/>
            <person name="Barrell B.G."/>
            <person name="Nurse P."/>
        </authorList>
    </citation>
    <scope>NUCLEOTIDE SEQUENCE [LARGE SCALE GENOMIC DNA]</scope>
    <source>
        <strain>972 / ATCC 24843</strain>
    </source>
</reference>
<reference key="3">
    <citation type="journal article" date="2006" name="Nat. Biotechnol.">
        <title>ORFeome cloning and global analysis of protein localization in the fission yeast Schizosaccharomyces pombe.</title>
        <authorList>
            <person name="Matsuyama A."/>
            <person name="Arai R."/>
            <person name="Yashiroda Y."/>
            <person name="Shirai A."/>
            <person name="Kamata A."/>
            <person name="Sekido S."/>
            <person name="Kobayashi Y."/>
            <person name="Hashimoto A."/>
            <person name="Hamamoto M."/>
            <person name="Hiraoka Y."/>
            <person name="Horinouchi S."/>
            <person name="Yoshida M."/>
        </authorList>
    </citation>
    <scope>SUBCELLULAR LOCATION [LARGE SCALE ANALYSIS]</scope>
</reference>
<protein>
    <recommendedName>
        <fullName>Isoleucine--tRNA ligase, cytoplasmic</fullName>
        <ecNumber>6.1.1.5</ecNumber>
    </recommendedName>
    <alternativeName>
        <fullName>Isoleucyl-tRNA synthetase</fullName>
        <shortName>IleRS</shortName>
    </alternativeName>
</protein>
<keyword id="KW-0030">Aminoacyl-tRNA synthetase</keyword>
<keyword id="KW-0067">ATP-binding</keyword>
<keyword id="KW-0963">Cytoplasm</keyword>
<keyword id="KW-0436">Ligase</keyword>
<keyword id="KW-0547">Nucleotide-binding</keyword>
<keyword id="KW-0648">Protein biosynthesis</keyword>
<keyword id="KW-1185">Reference proteome</keyword>
<sequence>MSFNVPKEEEKIVEFWREIDAFHTQLKLSQGRPTYTFFDGPPFATGRPHHGHLLASTIKDSVTRYACLKGYHVERRFGWDTHGLPVEHEIDKKLGITGSDDVMAMGIDKYNAECRKIVMTYASEWRATVERLGRWIDFDNDYKTLYPSFMESVWWVFKELHTKGKVYRGYRVMPYSTACTTPLSNFEAQQNYKEVPDPAIVVAFQSISDPEVSFLAWTTTPWTLPSNLALAVHPDLQYIKILDKDSNKKYILMESCLGILYKNPKKANFEILERFQGKALDGQKYEPLFPYFKSTFGERAFKLYSADYVEEGSGTGIVHQAPAFGEADYDAAWAAGIIDADHQPPCPVDEQGLLTSEITDFAGQYVKDADKEIIRSLKASGHLVKHSQIFHSYPFCWRSDTPLIYRAVPSWFVRVKEITNEMVENVMSTHWVPQNIRDKRFANWLKNARDWNISRNRYWGTPIPLWVSDDYEEVVCIGSIKELEELSGVSNITDIHRDSIDHITIPSKKGKGTLHRVSEVFDCWFESGSMPYASRHYPFERIEEFKHGFPADFISEGVDQTRGWFYTLTVLGTLLFDKAPYKNVIVSGLVMAEDGKKMSKRLKNYPEPNLIIEKYGSDALRLYLINSPVVRAEILKFKEDGVREVVTRVLIPWWNSYKFFEAQAALYKKVTGKDFVFDDAATLSSNVMDRWILARCQSLIGFVDEEMKQYRLYTVVPQLLGLIEEMTNWYIRFNRRRLKGEDGEIETINALNVLFEVLFTLVRIMGPFTPFITENIYQHLRNYMPIDKNEISLRSVHFLPFPTYKSELDDETVLRRVKRMQTIIELARYVREQNNISLKTPLKTLIVILTNEEYLEDAKLLERYIAEELNVREVVFTSNEEKYGVVYSVQADWPVLGKKLRKDMARVKKALPNVTSEEVKEFQKNKKMVLDGIELVEGDLQIIRSVEVKNEFLKSNTDGICIVLLDIEIDAQLQAEGLAREVINRVQRLRKKSNLQVTDDVRMTYKIKNDTIGLESAVDSNEALFSKVLRRPIEKETGADESNIIASEEQDVQGATFLLSLLRL</sequence>
<comment type="catalytic activity">
    <reaction>
        <text>tRNA(Ile) + L-isoleucine + ATP = L-isoleucyl-tRNA(Ile) + AMP + diphosphate</text>
        <dbReference type="Rhea" id="RHEA:11060"/>
        <dbReference type="Rhea" id="RHEA-COMP:9666"/>
        <dbReference type="Rhea" id="RHEA-COMP:9695"/>
        <dbReference type="ChEBI" id="CHEBI:30616"/>
        <dbReference type="ChEBI" id="CHEBI:33019"/>
        <dbReference type="ChEBI" id="CHEBI:58045"/>
        <dbReference type="ChEBI" id="CHEBI:78442"/>
        <dbReference type="ChEBI" id="CHEBI:78528"/>
        <dbReference type="ChEBI" id="CHEBI:456215"/>
        <dbReference type="EC" id="6.1.1.5"/>
    </reaction>
</comment>
<comment type="subcellular location">
    <subcellularLocation>
        <location evidence="2">Cytoplasm</location>
    </subcellularLocation>
</comment>
<comment type="similarity">
    <text evidence="3">Belongs to the class-I aminoacyl-tRNA synthetase family.</text>
</comment>
<organism>
    <name type="scientific">Schizosaccharomyces pombe (strain 972 / ATCC 24843)</name>
    <name type="common">Fission yeast</name>
    <dbReference type="NCBI Taxonomy" id="284812"/>
    <lineage>
        <taxon>Eukaryota</taxon>
        <taxon>Fungi</taxon>
        <taxon>Dikarya</taxon>
        <taxon>Ascomycota</taxon>
        <taxon>Taphrinomycotina</taxon>
        <taxon>Schizosaccharomycetes</taxon>
        <taxon>Schizosaccharomycetales</taxon>
        <taxon>Schizosaccharomycetaceae</taxon>
        <taxon>Schizosaccharomyces</taxon>
    </lineage>
</organism>
<evidence type="ECO:0000250" key="1"/>
<evidence type="ECO:0000269" key="2">
    <source>
    </source>
</evidence>
<evidence type="ECO:0000305" key="3"/>
<proteinExistence type="inferred from homology"/>
<dbReference type="EC" id="6.1.1.5"/>
<dbReference type="EMBL" id="AB004538">
    <property type="protein sequence ID" value="BAA21439.1"/>
    <property type="molecule type" value="Genomic_DNA"/>
</dbReference>
<dbReference type="EMBL" id="CU329671">
    <property type="protein sequence ID" value="CAA17821.1"/>
    <property type="molecule type" value="Genomic_DNA"/>
</dbReference>
<dbReference type="PIR" id="T40751">
    <property type="entry name" value="T40751"/>
</dbReference>
<dbReference type="RefSeq" id="NP_595569.1">
    <property type="nucleotide sequence ID" value="NM_001021464.2"/>
</dbReference>
<dbReference type="SMR" id="O13651"/>
<dbReference type="BioGRID" id="277759">
    <property type="interactions" value="7"/>
</dbReference>
<dbReference type="DIP" id="DIP-59122N"/>
<dbReference type="FunCoup" id="O13651">
    <property type="interactions" value="694"/>
</dbReference>
<dbReference type="IntAct" id="O13651">
    <property type="interactions" value="1"/>
</dbReference>
<dbReference type="STRING" id="284812.O13651"/>
<dbReference type="iPTMnet" id="O13651"/>
<dbReference type="SwissPalm" id="O13651"/>
<dbReference type="PaxDb" id="4896-SPBC8D2.06.1"/>
<dbReference type="EnsemblFungi" id="SPBC8D2.06.1">
    <property type="protein sequence ID" value="SPBC8D2.06.1:pep"/>
    <property type="gene ID" value="SPBC8D2.06"/>
</dbReference>
<dbReference type="GeneID" id="2541245"/>
<dbReference type="KEGG" id="spo:2541245"/>
<dbReference type="PomBase" id="SPBC8D2.06">
    <property type="gene designation" value="irs1"/>
</dbReference>
<dbReference type="VEuPathDB" id="FungiDB:SPBC8D2.06"/>
<dbReference type="eggNOG" id="KOG0434">
    <property type="taxonomic scope" value="Eukaryota"/>
</dbReference>
<dbReference type="HOGENOM" id="CLU_001493_1_0_1"/>
<dbReference type="InParanoid" id="O13651"/>
<dbReference type="OMA" id="EIIVIHK"/>
<dbReference type="PhylomeDB" id="O13651"/>
<dbReference type="PRO" id="PR:O13651"/>
<dbReference type="Proteomes" id="UP000002485">
    <property type="component" value="Chromosome II"/>
</dbReference>
<dbReference type="GO" id="GO:0005829">
    <property type="term" value="C:cytosol"/>
    <property type="evidence" value="ECO:0007005"/>
    <property type="project" value="PomBase"/>
</dbReference>
<dbReference type="GO" id="GO:0002161">
    <property type="term" value="F:aminoacyl-tRNA deacylase activity"/>
    <property type="evidence" value="ECO:0007669"/>
    <property type="project" value="InterPro"/>
</dbReference>
<dbReference type="GO" id="GO:0005524">
    <property type="term" value="F:ATP binding"/>
    <property type="evidence" value="ECO:0007669"/>
    <property type="project" value="UniProtKB-KW"/>
</dbReference>
<dbReference type="GO" id="GO:0004822">
    <property type="term" value="F:isoleucine-tRNA ligase activity"/>
    <property type="evidence" value="ECO:0000318"/>
    <property type="project" value="GO_Central"/>
</dbReference>
<dbReference type="GO" id="GO:0000049">
    <property type="term" value="F:tRNA binding"/>
    <property type="evidence" value="ECO:0007669"/>
    <property type="project" value="InterPro"/>
</dbReference>
<dbReference type="GO" id="GO:0002181">
    <property type="term" value="P:cytoplasmic translation"/>
    <property type="evidence" value="ECO:0000303"/>
    <property type="project" value="PomBase"/>
</dbReference>
<dbReference type="GO" id="GO:0006428">
    <property type="term" value="P:isoleucyl-tRNA aminoacylation"/>
    <property type="evidence" value="ECO:0000318"/>
    <property type="project" value="GO_Central"/>
</dbReference>
<dbReference type="CDD" id="cd07961">
    <property type="entry name" value="Anticodon_Ia_Ile_ABEc"/>
    <property type="match status" value="1"/>
</dbReference>
<dbReference type="CDD" id="cd00818">
    <property type="entry name" value="IleRS_core"/>
    <property type="match status" value="1"/>
</dbReference>
<dbReference type="FunFam" id="1.10.730.10:FF:000004">
    <property type="entry name" value="Isoleucyl-tRNA synthetase, cytoplasmic"/>
    <property type="match status" value="1"/>
</dbReference>
<dbReference type="FunFam" id="3.40.50.620:FF:000023">
    <property type="entry name" value="Isoleucyl-tRNA synthetase,cytoplasmic"/>
    <property type="match status" value="1"/>
</dbReference>
<dbReference type="FunFam" id="3.40.50.620:FF:000050">
    <property type="entry name" value="Isoleucyl-tRNA synthetase,cytoplasmic"/>
    <property type="match status" value="1"/>
</dbReference>
<dbReference type="Gene3D" id="3.40.50.620">
    <property type="entry name" value="HUPs"/>
    <property type="match status" value="2"/>
</dbReference>
<dbReference type="Gene3D" id="1.10.730.10">
    <property type="entry name" value="Isoleucyl-tRNA Synthetase, Domain 1"/>
    <property type="match status" value="1"/>
</dbReference>
<dbReference type="HAMAP" id="MF_02003">
    <property type="entry name" value="Ile_tRNA_synth_type2"/>
    <property type="match status" value="1"/>
</dbReference>
<dbReference type="InterPro" id="IPR002300">
    <property type="entry name" value="aa-tRNA-synth_Ia"/>
</dbReference>
<dbReference type="InterPro" id="IPR033709">
    <property type="entry name" value="Anticodon_Ile_ABEc"/>
</dbReference>
<dbReference type="InterPro" id="IPR002301">
    <property type="entry name" value="Ile-tRNA-ligase"/>
</dbReference>
<dbReference type="InterPro" id="IPR023586">
    <property type="entry name" value="Ile-tRNA-ligase_type2"/>
</dbReference>
<dbReference type="InterPro" id="IPR013155">
    <property type="entry name" value="M/V/L/I-tRNA-synth_anticd-bd"/>
</dbReference>
<dbReference type="InterPro" id="IPR014729">
    <property type="entry name" value="Rossmann-like_a/b/a_fold"/>
</dbReference>
<dbReference type="InterPro" id="IPR009080">
    <property type="entry name" value="tRNAsynth_Ia_anticodon-bd"/>
</dbReference>
<dbReference type="InterPro" id="IPR009008">
    <property type="entry name" value="Val/Leu/Ile-tRNA-synth_edit"/>
</dbReference>
<dbReference type="NCBIfam" id="TIGR00392">
    <property type="entry name" value="ileS"/>
    <property type="match status" value="1"/>
</dbReference>
<dbReference type="PANTHER" id="PTHR42780:SF1">
    <property type="entry name" value="ISOLEUCINE--TRNA LIGASE, CYTOPLASMIC"/>
    <property type="match status" value="1"/>
</dbReference>
<dbReference type="PANTHER" id="PTHR42780">
    <property type="entry name" value="SOLEUCYL-TRNA SYNTHETASE"/>
    <property type="match status" value="1"/>
</dbReference>
<dbReference type="Pfam" id="PF08264">
    <property type="entry name" value="Anticodon_1"/>
    <property type="match status" value="1"/>
</dbReference>
<dbReference type="Pfam" id="PF19302">
    <property type="entry name" value="DUF5915"/>
    <property type="match status" value="1"/>
</dbReference>
<dbReference type="Pfam" id="PF00133">
    <property type="entry name" value="tRNA-synt_1"/>
    <property type="match status" value="1"/>
</dbReference>
<dbReference type="PRINTS" id="PR00984">
    <property type="entry name" value="TRNASYNTHILE"/>
</dbReference>
<dbReference type="SUPFAM" id="SSF47323">
    <property type="entry name" value="Anticodon-binding domain of a subclass of class I aminoacyl-tRNA synthetases"/>
    <property type="match status" value="1"/>
</dbReference>
<dbReference type="SUPFAM" id="SSF52374">
    <property type="entry name" value="Nucleotidylyl transferase"/>
    <property type="match status" value="1"/>
</dbReference>
<dbReference type="SUPFAM" id="SSF50677">
    <property type="entry name" value="ValRS/IleRS/LeuRS editing domain"/>
    <property type="match status" value="1"/>
</dbReference>
<name>SYIC_SCHPO</name>
<accession>O13651</accession>